<protein>
    <recommendedName>
        <fullName>Protein EMP46</fullName>
    </recommendedName>
    <alternativeName>
        <fullName>46 kDa endomembrane protein</fullName>
    </alternativeName>
</protein>
<organism>
    <name type="scientific">Saccharomyces cerevisiae (strain ATCC 204508 / S288c)</name>
    <name type="common">Baker's yeast</name>
    <dbReference type="NCBI Taxonomy" id="559292"/>
    <lineage>
        <taxon>Eukaryota</taxon>
        <taxon>Fungi</taxon>
        <taxon>Dikarya</taxon>
        <taxon>Ascomycota</taxon>
        <taxon>Saccharomycotina</taxon>
        <taxon>Saccharomycetes</taxon>
        <taxon>Saccharomycetales</taxon>
        <taxon>Saccharomycetaceae</taxon>
        <taxon>Saccharomyces</taxon>
    </lineage>
</organism>
<proteinExistence type="evidence at protein level"/>
<reference key="1">
    <citation type="journal article" date="1997" name="Nature">
        <title>The nucleotide sequence of Saccharomyces cerevisiae chromosome XII.</title>
        <authorList>
            <person name="Johnston M."/>
            <person name="Hillier L.W."/>
            <person name="Riles L."/>
            <person name="Albermann K."/>
            <person name="Andre B."/>
            <person name="Ansorge W."/>
            <person name="Benes V."/>
            <person name="Brueckner M."/>
            <person name="Delius H."/>
            <person name="Dubois E."/>
            <person name="Duesterhoeft A."/>
            <person name="Entian K.-D."/>
            <person name="Floeth M."/>
            <person name="Goffeau A."/>
            <person name="Hebling U."/>
            <person name="Heumann K."/>
            <person name="Heuss-Neitzel D."/>
            <person name="Hilbert H."/>
            <person name="Hilger F."/>
            <person name="Kleine K."/>
            <person name="Koetter P."/>
            <person name="Louis E.J."/>
            <person name="Messenguy F."/>
            <person name="Mewes H.-W."/>
            <person name="Miosga T."/>
            <person name="Moestl D."/>
            <person name="Mueller-Auer S."/>
            <person name="Nentwich U."/>
            <person name="Obermaier B."/>
            <person name="Piravandi E."/>
            <person name="Pohl T.M."/>
            <person name="Portetelle D."/>
            <person name="Purnelle B."/>
            <person name="Rechmann S."/>
            <person name="Rieger M."/>
            <person name="Rinke M."/>
            <person name="Rose M."/>
            <person name="Scharfe M."/>
            <person name="Scherens B."/>
            <person name="Scholler P."/>
            <person name="Schwager C."/>
            <person name="Schwarz S."/>
            <person name="Underwood A.P."/>
            <person name="Urrestarazu L.A."/>
            <person name="Vandenbol M."/>
            <person name="Verhasselt P."/>
            <person name="Vierendeels F."/>
            <person name="Voet M."/>
            <person name="Volckaert G."/>
            <person name="Voss H."/>
            <person name="Wambutt R."/>
            <person name="Wedler E."/>
            <person name="Wedler H."/>
            <person name="Zimmermann F.K."/>
            <person name="Zollner A."/>
            <person name="Hani J."/>
            <person name="Hoheisel J.D."/>
        </authorList>
    </citation>
    <scope>NUCLEOTIDE SEQUENCE [LARGE SCALE GENOMIC DNA]</scope>
    <source>
        <strain>ATCC 204508 / S288c</strain>
    </source>
</reference>
<reference key="2">
    <citation type="journal article" date="2014" name="G3 (Bethesda)">
        <title>The reference genome sequence of Saccharomyces cerevisiae: Then and now.</title>
        <authorList>
            <person name="Engel S.R."/>
            <person name="Dietrich F.S."/>
            <person name="Fisk D.G."/>
            <person name="Binkley G."/>
            <person name="Balakrishnan R."/>
            <person name="Costanzo M.C."/>
            <person name="Dwight S.S."/>
            <person name="Hitz B.C."/>
            <person name="Karra K."/>
            <person name="Nash R.S."/>
            <person name="Weng S."/>
            <person name="Wong E.D."/>
            <person name="Lloyd P."/>
            <person name="Skrzypek M.S."/>
            <person name="Miyasato S.R."/>
            <person name="Simison M."/>
            <person name="Cherry J.M."/>
        </authorList>
    </citation>
    <scope>GENOME REANNOTATION</scope>
    <source>
        <strain>ATCC 204508 / S288c</strain>
    </source>
</reference>
<reference key="3">
    <citation type="journal article" date="2002" name="Mol. Biol. Cell">
        <title>Emp47p and its close homolog Emp46p have a tyrosine-containing endoplasmic reticulum exit signal and function in glycoprotein secretion in Saccharomyces cerevisiae.</title>
        <authorList>
            <person name="Sato K."/>
            <person name="Nakano A."/>
        </authorList>
    </citation>
    <scope>PROTEIN SEQUENCE OF 47-56</scope>
    <scope>FUNCTION</scope>
    <scope>SUBCELLULAR LOCATION</scope>
    <scope>INTERACTION WITH COP1; SEC21 AND SEC23</scope>
    <scope>MUTAGENESIS OF TYR-429; PHE-432; 440-LYS--LYS-442; 440-LYS--LEU-444 AND 443-LEU-LEU-444</scope>
</reference>
<reference key="4">
    <citation type="journal article" date="2002" name="J. Mol. Biol.">
        <title>Genome-wide nuclear morphology screen identifies novel genes involved in nuclear architecture and gene-silencing in Saccharomyces cerevisiae.</title>
        <authorList>
            <person name="Teixeira M.T."/>
            <person name="Dujon B."/>
            <person name="Fabre E."/>
        </authorList>
    </citation>
    <scope>FUNCTION</scope>
    <scope>SUBCELLULAR LOCATION</scope>
</reference>
<reference key="5">
    <citation type="journal article" date="2003" name="Mol. Biol. Cell">
        <title>Oligomerization of a cargo receptor directs protein sorting into COPII-coated transport vesicles.</title>
        <authorList>
            <person name="Sato K."/>
            <person name="Nakano A."/>
        </authorList>
    </citation>
    <scope>INTERACTION WITH EMP47</scope>
    <scope>SUBCELLULAR LOCATION</scope>
</reference>
<reference key="6">
    <citation type="journal article" date="2003" name="Nature">
        <title>Global analysis of protein localization in budding yeast.</title>
        <authorList>
            <person name="Huh W.-K."/>
            <person name="Falvo J.V."/>
            <person name="Gerke L.C."/>
            <person name="Carroll A.S."/>
            <person name="Howson R.W."/>
            <person name="Weissman J.S."/>
            <person name="O'Shea E.K."/>
        </authorList>
    </citation>
    <scope>SUBCELLULAR LOCATION [LARGE SCALE ANALYSIS]</scope>
</reference>
<reference key="7">
    <citation type="journal article" date="2004" name="J. Biol. Chem.">
        <title>Reconstitution of coat protein complex II (COPII) vesicle formation from cargo-reconstituted proteoliposomes reveals the potential role of GTP hydrolysis by Sar1p in protein sorting.</title>
        <authorList>
            <person name="Sato K."/>
            <person name="Nakano A."/>
        </authorList>
    </citation>
    <scope>FUNCTION</scope>
</reference>
<reference key="8">
    <citation type="journal article" date="2006" name="Proc. Natl. Acad. Sci. U.S.A.">
        <title>A global topology map of the Saccharomyces cerevisiae membrane proteome.</title>
        <authorList>
            <person name="Kim H."/>
            <person name="Melen K."/>
            <person name="Oesterberg M."/>
            <person name="von Heijne G."/>
        </authorList>
    </citation>
    <scope>TOPOLOGY [LARGE SCALE ANALYSIS]</scope>
    <source>
        <strain>ATCC 208353 / W303-1A</strain>
    </source>
</reference>
<reference key="9">
    <citation type="journal article" date="2006" name="J. Biol. Chem.">
        <title>Structures of the carbohydrate recognition domain of Ca2+-independent cargo receptors Emp46p and Emp47p.</title>
        <authorList>
            <person name="Satoh T."/>
            <person name="Sato K."/>
            <person name="Kanoh A."/>
            <person name="Yamashita K."/>
            <person name="Yamada Y."/>
            <person name="Igarashi N."/>
            <person name="Kato R."/>
            <person name="Nakano A."/>
            <person name="Wakatsuki S."/>
        </authorList>
    </citation>
    <scope>X-RAY CRYSTALLOGRAPHY (1.52 ANGSTROMS) OF 52-275</scope>
    <scope>POTASSIUM-BINDING</scope>
    <scope>MUTAGENESIS OF TYR-177</scope>
</reference>
<dbReference type="EMBL" id="Z73252">
    <property type="protein sequence ID" value="CAA97639.1"/>
    <property type="molecule type" value="Genomic_DNA"/>
</dbReference>
<dbReference type="EMBL" id="U53880">
    <property type="protein sequence ID" value="AAB67584.1"/>
    <property type="molecule type" value="Genomic_DNA"/>
</dbReference>
<dbReference type="EMBL" id="BK006945">
    <property type="protein sequence ID" value="DAA09396.1"/>
    <property type="molecule type" value="Genomic_DNA"/>
</dbReference>
<dbReference type="PIR" id="S64912">
    <property type="entry name" value="S64912"/>
</dbReference>
<dbReference type="RefSeq" id="NP_013181.1">
    <property type="nucleotide sequence ID" value="NM_001181967.1"/>
</dbReference>
<dbReference type="PDB" id="2A6V">
    <property type="method" value="X-ray"/>
    <property type="resolution" value="1.52 A"/>
    <property type="chains" value="A/B=52-275"/>
</dbReference>
<dbReference type="PDB" id="2A6W">
    <property type="method" value="X-ray"/>
    <property type="resolution" value="1.75 A"/>
    <property type="chains" value="A/B=52-275"/>
</dbReference>
<dbReference type="PDB" id="2A6X">
    <property type="method" value="X-ray"/>
    <property type="resolution" value="1.55 A"/>
    <property type="chains" value="A/B=52-275"/>
</dbReference>
<dbReference type="PDBsum" id="2A6V"/>
<dbReference type="PDBsum" id="2A6W"/>
<dbReference type="PDBsum" id="2A6X"/>
<dbReference type="SMR" id="Q12396"/>
<dbReference type="BioGRID" id="31353">
    <property type="interactions" value="113"/>
</dbReference>
<dbReference type="DIP" id="DIP-4209N"/>
<dbReference type="FunCoup" id="Q12396">
    <property type="interactions" value="181"/>
</dbReference>
<dbReference type="IntAct" id="Q12396">
    <property type="interactions" value="9"/>
</dbReference>
<dbReference type="STRING" id="4932.YLR080W"/>
<dbReference type="UniLectin" id="Q12396"/>
<dbReference type="PaxDb" id="4932-YLR080W"/>
<dbReference type="PeptideAtlas" id="Q12396"/>
<dbReference type="EnsemblFungi" id="YLR080W_mRNA">
    <property type="protein sequence ID" value="YLR080W"/>
    <property type="gene ID" value="YLR080W"/>
</dbReference>
<dbReference type="GeneID" id="850769"/>
<dbReference type="KEGG" id="sce:YLR080W"/>
<dbReference type="AGR" id="SGD:S000004070"/>
<dbReference type="SGD" id="S000004070">
    <property type="gene designation" value="EMP46"/>
</dbReference>
<dbReference type="VEuPathDB" id="FungiDB:YLR080W"/>
<dbReference type="eggNOG" id="ENOG502QR1C">
    <property type="taxonomic scope" value="Eukaryota"/>
</dbReference>
<dbReference type="GeneTree" id="ENSGT00940000176827"/>
<dbReference type="HOGENOM" id="CLU_050572_0_0_1"/>
<dbReference type="InParanoid" id="Q12396"/>
<dbReference type="OMA" id="MTIEWTF"/>
<dbReference type="OrthoDB" id="10265193at2759"/>
<dbReference type="BioCyc" id="YEAST:G3O-32231-MONOMER"/>
<dbReference type="Reactome" id="R-SCE-9013106">
    <property type="pathway name" value="RHOC GTPase cycle"/>
</dbReference>
<dbReference type="BioGRID-ORCS" id="850769">
    <property type="hits" value="2 hits in 10 CRISPR screens"/>
</dbReference>
<dbReference type="EvolutionaryTrace" id="Q12396"/>
<dbReference type="PRO" id="PR:Q12396"/>
<dbReference type="Proteomes" id="UP000002311">
    <property type="component" value="Chromosome XII"/>
</dbReference>
<dbReference type="RNAct" id="Q12396">
    <property type="molecule type" value="protein"/>
</dbReference>
<dbReference type="GO" id="GO:0030134">
    <property type="term" value="C:COPII-coated ER to Golgi transport vesicle"/>
    <property type="evidence" value="ECO:0000353"/>
    <property type="project" value="SGD"/>
</dbReference>
<dbReference type="GO" id="GO:0005783">
    <property type="term" value="C:endoplasmic reticulum"/>
    <property type="evidence" value="ECO:0007005"/>
    <property type="project" value="SGD"/>
</dbReference>
<dbReference type="GO" id="GO:0005789">
    <property type="term" value="C:endoplasmic reticulum membrane"/>
    <property type="evidence" value="ECO:0000318"/>
    <property type="project" value="GO_Central"/>
</dbReference>
<dbReference type="GO" id="GO:0005793">
    <property type="term" value="C:endoplasmic reticulum-Golgi intermediate compartment"/>
    <property type="evidence" value="ECO:0000318"/>
    <property type="project" value="GO_Central"/>
</dbReference>
<dbReference type="GO" id="GO:0000139">
    <property type="term" value="C:Golgi membrane"/>
    <property type="evidence" value="ECO:0000314"/>
    <property type="project" value="SGD"/>
</dbReference>
<dbReference type="GO" id="GO:0030246">
    <property type="term" value="F:carbohydrate binding"/>
    <property type="evidence" value="ECO:0000314"/>
    <property type="project" value="SGD"/>
</dbReference>
<dbReference type="GO" id="GO:0005537">
    <property type="term" value="F:D-mannose binding"/>
    <property type="evidence" value="ECO:0000318"/>
    <property type="project" value="GO_Central"/>
</dbReference>
<dbReference type="GO" id="GO:0046872">
    <property type="term" value="F:metal ion binding"/>
    <property type="evidence" value="ECO:0007669"/>
    <property type="project" value="UniProtKB-KW"/>
</dbReference>
<dbReference type="GO" id="GO:0006888">
    <property type="term" value="P:endoplasmic reticulum to Golgi vesicle-mediated transport"/>
    <property type="evidence" value="ECO:0000316"/>
    <property type="project" value="SGD"/>
</dbReference>
<dbReference type="GO" id="GO:0015031">
    <property type="term" value="P:protein transport"/>
    <property type="evidence" value="ECO:0007669"/>
    <property type="project" value="UniProtKB-KW"/>
</dbReference>
<dbReference type="CDD" id="cd06903">
    <property type="entry name" value="lectin_EMP46_EMP47"/>
    <property type="match status" value="1"/>
</dbReference>
<dbReference type="Gene3D" id="2.60.120.200">
    <property type="match status" value="1"/>
</dbReference>
<dbReference type="InterPro" id="IPR013320">
    <property type="entry name" value="ConA-like_dom_sf"/>
</dbReference>
<dbReference type="InterPro" id="IPR016710">
    <property type="entry name" value="Emp46/Emp47"/>
</dbReference>
<dbReference type="InterPro" id="IPR035661">
    <property type="entry name" value="EMP46/EMP47_N"/>
</dbReference>
<dbReference type="InterPro" id="IPR051136">
    <property type="entry name" value="Intracellular_Lectin-GPT"/>
</dbReference>
<dbReference type="InterPro" id="IPR005052">
    <property type="entry name" value="Lectin_leg"/>
</dbReference>
<dbReference type="PANTHER" id="PTHR12223:SF28">
    <property type="entry name" value="LECTIN, MANNOSE BINDING 1 LIKE"/>
    <property type="match status" value="1"/>
</dbReference>
<dbReference type="PANTHER" id="PTHR12223">
    <property type="entry name" value="VESICULAR MANNOSE-BINDING LECTIN"/>
    <property type="match status" value="1"/>
</dbReference>
<dbReference type="Pfam" id="PF03388">
    <property type="entry name" value="Lectin_leg-like"/>
    <property type="match status" value="1"/>
</dbReference>
<dbReference type="PIRSF" id="PIRSF018136">
    <property type="entry name" value="L-type_lectin_fungi"/>
    <property type="match status" value="1"/>
</dbReference>
<dbReference type="SUPFAM" id="SSF49899">
    <property type="entry name" value="Concanavalin A-like lectins/glucanases"/>
    <property type="match status" value="1"/>
</dbReference>
<dbReference type="PROSITE" id="PS51328">
    <property type="entry name" value="L_LECTIN_LIKE"/>
    <property type="match status" value="1"/>
</dbReference>
<evidence type="ECO:0000250" key="1"/>
<evidence type="ECO:0000255" key="2"/>
<evidence type="ECO:0000255" key="3">
    <source>
        <dbReference type="PROSITE-ProRule" id="PRU00658"/>
    </source>
</evidence>
<evidence type="ECO:0000269" key="4">
    <source>
    </source>
</evidence>
<evidence type="ECO:0000269" key="5">
    <source>
    </source>
</evidence>
<evidence type="ECO:0000269" key="6">
    <source>
    </source>
</evidence>
<evidence type="ECO:0000269" key="7">
    <source>
    </source>
</evidence>
<evidence type="ECO:0000269" key="8">
    <source>
    </source>
</evidence>
<evidence type="ECO:0000305" key="9"/>
<evidence type="ECO:0007829" key="10">
    <source>
        <dbReference type="PDB" id="2A6V"/>
    </source>
</evidence>
<keyword id="KW-0002">3D-structure</keyword>
<keyword id="KW-0903">Direct protein sequencing</keyword>
<keyword id="KW-1015">Disulfide bond</keyword>
<keyword id="KW-0256">Endoplasmic reticulum</keyword>
<keyword id="KW-0333">Golgi apparatus</keyword>
<keyword id="KW-0430">Lectin</keyword>
<keyword id="KW-0472">Membrane</keyword>
<keyword id="KW-0479">Metal-binding</keyword>
<keyword id="KW-0630">Potassium</keyword>
<keyword id="KW-0653">Protein transport</keyword>
<keyword id="KW-1185">Reference proteome</keyword>
<keyword id="KW-0732">Signal</keyword>
<keyword id="KW-0812">Transmembrane</keyword>
<keyword id="KW-1133">Transmembrane helix</keyword>
<keyword id="KW-0813">Transport</keyword>
<sequence>MTTRKTASSLQLLGKITGTKAGTKQKKMNFINGLIWLYMCVWMVHGKVTQKDELKWNKGYSLPNLLEVTDQQKELSQWTLGDKVKLEEGRFVLTPGKNTKGSLWLKPEYSIKDAMTIEWTFRSFGFRGSTKGGLAFWLKQGNEGDSTELFGGSSKKFNGLMILLRLDDKLGESVTAYLNDGTKDLDIESSPYFASCLFQYQDSMVPSTLRLTYNPLDNHLLKLQMDNRVCFQTRKVKFMGSSPFRIGTSAINDASKESFEILKMKLYDGVIEDSLIPNVNPMGQPRVVTKVINSQTGEESFREKMPFSDKEESITSNELFEKMNKLEGKIMANDIDPLLRKMNKIVENERELIQRLRPLLDLKKTAISDDSFQDFLSMNANLDRLIKEQEKIRQDAKLYGKQTKGHDEIFSKISVWLALLIFIMITLAYYMFRINQDIKKVKLL</sequence>
<name>EMP46_YEAST</name>
<feature type="signal peptide" evidence="4">
    <location>
        <begin position="1"/>
        <end position="46"/>
    </location>
</feature>
<feature type="chain" id="PRO_0000239645" description="Protein EMP46">
    <location>
        <begin position="47"/>
        <end position="444"/>
    </location>
</feature>
<feature type="topological domain" description="Lumenal" evidence="2">
    <location>
        <begin position="47"/>
        <end position="408"/>
    </location>
</feature>
<feature type="transmembrane region" description="Helical" evidence="2">
    <location>
        <begin position="409"/>
        <end position="429"/>
    </location>
</feature>
<feature type="topological domain" description="Cytoplasmic" evidence="2">
    <location>
        <begin position="430"/>
        <end position="444"/>
    </location>
</feature>
<feature type="domain" description="L-type lectin-like" evidence="3">
    <location>
        <begin position="52"/>
        <end position="269"/>
    </location>
</feature>
<feature type="region of interest" description="Mediates the interactions with COPI and COPII coat complexes">
    <location>
        <begin position="429"/>
        <end position="432"/>
    </location>
</feature>
<feature type="short sequence motif" description="Di-lysine motif">
    <location>
        <begin position="440"/>
        <end position="444"/>
    </location>
</feature>
<feature type="binding site">
    <location>
        <position position="177"/>
    </location>
    <ligand>
        <name>K(+)</name>
        <dbReference type="ChEBI" id="CHEBI:29103"/>
    </ligand>
</feature>
<feature type="disulfide bond">
    <location>
        <begin position="196"/>
        <end position="230"/>
    </location>
</feature>
<feature type="mutagenesis site" description="Impairs potassium-binding." evidence="8">
    <original>Y</original>
    <variation>F</variation>
    <location>
        <position position="177"/>
    </location>
</feature>
<feature type="mutagenesis site" description="Impairs interaction with COP1, SEC21 and SEC23 and loss of endoplasmic reticulum exit." evidence="4">
    <original>Y</original>
    <variation>A</variation>
    <location>
        <position position="429"/>
    </location>
</feature>
<feature type="mutagenesis site" description="Impairs interaction with COP1, SEC21 and SEC23 and loss of endoplasmic reticulum exit." evidence="4">
    <original>F</original>
    <variation>A</variation>
    <location>
        <position position="432"/>
    </location>
</feature>
<feature type="mutagenesis site" description="Loss of endoplasmic reticulum exit." evidence="4">
    <location>
        <begin position="440"/>
        <end position="444"/>
    </location>
</feature>
<feature type="mutagenesis site" description="Impairs interaction with COP1 and SEC21 and mislocalizes to the vacuole." evidence="4">
    <original>KVK</original>
    <variation>SVS</variation>
    <variation>RVR</variation>
    <location>
        <begin position="440"/>
        <end position="442"/>
    </location>
</feature>
<feature type="mutagenesis site" description="Loss of endoplasmic reticulum exit." evidence="4">
    <original>LL</original>
    <variation>AA</variation>
    <location>
        <begin position="443"/>
        <end position="444"/>
    </location>
</feature>
<feature type="helix" evidence="10">
    <location>
        <begin position="58"/>
        <end position="60"/>
    </location>
</feature>
<feature type="turn" evidence="10">
    <location>
        <begin position="65"/>
        <end position="67"/>
    </location>
</feature>
<feature type="helix" evidence="10">
    <location>
        <begin position="71"/>
        <end position="74"/>
    </location>
</feature>
<feature type="turn" evidence="10">
    <location>
        <begin position="75"/>
        <end position="77"/>
    </location>
</feature>
<feature type="strand" evidence="10">
    <location>
        <begin position="78"/>
        <end position="82"/>
    </location>
</feature>
<feature type="strand" evidence="10">
    <location>
        <begin position="85"/>
        <end position="87"/>
    </location>
</feature>
<feature type="strand" evidence="10">
    <location>
        <begin position="90"/>
        <end position="93"/>
    </location>
</feature>
<feature type="strand" evidence="10">
    <location>
        <begin position="100"/>
        <end position="107"/>
    </location>
</feature>
<feature type="strand" evidence="10">
    <location>
        <begin position="115"/>
        <end position="125"/>
    </location>
</feature>
<feature type="strand" evidence="10">
    <location>
        <begin position="133"/>
        <end position="139"/>
    </location>
</feature>
<feature type="turn" evidence="10">
    <location>
        <begin position="150"/>
        <end position="152"/>
    </location>
</feature>
<feature type="strand" evidence="10">
    <location>
        <begin position="158"/>
        <end position="167"/>
    </location>
</feature>
<feature type="turn" evidence="10">
    <location>
        <begin position="168"/>
        <end position="170"/>
    </location>
</feature>
<feature type="strand" evidence="10">
    <location>
        <begin position="171"/>
        <end position="183"/>
    </location>
</feature>
<feature type="turn" evidence="10">
    <location>
        <begin position="187"/>
        <end position="189"/>
    </location>
</feature>
<feature type="strand" evidence="10">
    <location>
        <begin position="193"/>
        <end position="197"/>
    </location>
</feature>
<feature type="strand" evidence="10">
    <location>
        <begin position="207"/>
        <end position="214"/>
    </location>
</feature>
<feature type="helix" evidence="10">
    <location>
        <begin position="215"/>
        <end position="217"/>
    </location>
</feature>
<feature type="strand" evidence="10">
    <location>
        <begin position="219"/>
        <end position="225"/>
    </location>
</feature>
<feature type="strand" evidence="10">
    <location>
        <begin position="228"/>
        <end position="234"/>
    </location>
</feature>
<feature type="helix" evidence="10">
    <location>
        <begin position="238"/>
        <end position="240"/>
    </location>
</feature>
<feature type="strand" evidence="10">
    <location>
        <begin position="244"/>
        <end position="251"/>
    </location>
</feature>
<feature type="strand" evidence="10">
    <location>
        <begin position="258"/>
        <end position="269"/>
    </location>
</feature>
<gene>
    <name type="primary">EMP46</name>
    <name type="ordered locus">YLR080W</name>
</gene>
<accession>Q12396</accession>
<accession>D6VY80</accession>
<comment type="function">
    <text evidence="4 5 7">Involved in the secretion of glycoproteins and in nucleus architecture and gene silencing.</text>
</comment>
<comment type="subunit">
    <text evidence="4 6">Interacts with EMP47 in the endoplasmic reticulum membrane in order to be transported to the Golgi apparatus. Interacts with the coatomer proteins COP1, SEC21 and SEC23.</text>
</comment>
<comment type="interaction">
    <interactant intactId="EBI-38641">
        <id>Q12396</id>
    </interactant>
    <interactant intactId="EBI-6439">
        <id>P43555</id>
        <label>EMP47</label>
    </interactant>
    <organismsDiffer>false</organismsDiffer>
    <experiments>4</experiments>
</comment>
<comment type="subcellular location">
    <subcellularLocation>
        <location>Golgi apparatus membrane</location>
        <topology>Single-pass type I membrane protein</topology>
    </subcellularLocation>
    <subcellularLocation>
        <location>Endoplasmic reticulum membrane</location>
        <topology>Single-pass type I membrane protein</topology>
    </subcellularLocation>
</comment>
<comment type="domain">
    <text evidence="1">The di-lysine motif confers endoplasmic reticulum localization for type I membrane proteins.</text>
</comment>
<comment type="similarity">
    <text evidence="9">Belongs to the EMP46/EMP47 family.</text>
</comment>